<gene>
    <name type="primary">mnhA1</name>
    <name type="ordered locus">SA0813</name>
</gene>
<name>MNHA1_STAAN</name>
<organism>
    <name type="scientific">Staphylococcus aureus (strain N315)</name>
    <dbReference type="NCBI Taxonomy" id="158879"/>
    <lineage>
        <taxon>Bacteria</taxon>
        <taxon>Bacillati</taxon>
        <taxon>Bacillota</taxon>
        <taxon>Bacilli</taxon>
        <taxon>Bacillales</taxon>
        <taxon>Staphylococcaceae</taxon>
        <taxon>Staphylococcus</taxon>
    </lineage>
</organism>
<sequence>MSLLHIAVILPLIFALIIPILYRFFKRIHLGWFVLPVPIVIFIYMLTLIKTTMSGNTVMKTLNWMPHFGMNFDLYLDGLGLLFSLLISGIGSLVVLYSIGYLSKSEQLGNFYCYLLLFMGAMLGVVLSDNVIILYLFWELTSFSSFLLISFWRERQASIYGAQKSLIITVFGGLSLLGGIILLAIPTQSFSIQYMIQHASEIQNSPFFIFAMILIMIGAFTKSAQFPFYIWLPDAMEAPTPVSAYLHSATMVKAGLYLIARMTPIFAASQGWVWTVTLVGLITLFWASLNATKQQDLKGILAFSTVSQLGMIMAMLGIGAISYHYQGDDSKIYAAAFTAAIFHLINHATFKGALFMITGAVDHSTGTRDVKKLGGLLTIMPISFTITVITALSMAGVPPFNGFLSKESFLETTFTASQANLFSVDTLGYLFPIIGIVGSVFTFVYSIKFIMHIFFGQYKPEQLPKKAHEVSILMLLSPAILATLVIVLGLFPGILTNSIIEPATSSINHTVIDDVEFHMFHGLTPAFLSTLVIYILGILLIVTFSYWVKLLQRQPGKLTFNYWYNRSANVIPNYSEKMTNSYVTDYSRNNLVIIFGALILLTFVTIFSVPFNINFKDVSPIRIFEVCIVILLLSAAFLILFAKSRLFSIIMLSAVGYAVSVLFIFFKAPDLALTQFVVESISTALFLLCFYHLPNLNRYNEKRSFQLTNALIAGGVGLSVIIIGLIAYGNRHFESISKFYQEHVYDLAHGKNMVNVILVDFRGMDTLFESSVLGIAGLAVYTMIKLRKKRQTQGNEVKNHE</sequence>
<comment type="function">
    <text evidence="1">Mnh complex is a Na(+)/H(+) antiporter involved in Na(+) excretion.</text>
</comment>
<comment type="subunit">
    <text evidence="1">May form a heterooligomeric complex that consists of seven subunits: mnhA1, mnhB1, mnhC1, mnhD1, mnhE1, mnhF1 and mnhG1.</text>
</comment>
<comment type="subcellular location">
    <subcellularLocation>
        <location evidence="3">Cell membrane</location>
        <topology evidence="3">Multi-pass membrane protein</topology>
    </subcellularLocation>
</comment>
<comment type="similarity">
    <text evidence="3">Belongs to the CPA3 antiporters (TC 2.A.63) subunit A family.</text>
</comment>
<dbReference type="EMBL" id="BA000018">
    <property type="protein sequence ID" value="BAB42052.1"/>
    <property type="molecule type" value="Genomic_DNA"/>
</dbReference>
<dbReference type="PIR" id="A89862">
    <property type="entry name" value="A89862"/>
</dbReference>
<dbReference type="RefSeq" id="WP_000054612.1">
    <property type="nucleotide sequence ID" value="NC_002745.2"/>
</dbReference>
<dbReference type="SMR" id="P60675"/>
<dbReference type="EnsemblBacteria" id="BAB42052">
    <property type="protein sequence ID" value="BAB42052"/>
    <property type="gene ID" value="BAB42052"/>
</dbReference>
<dbReference type="KEGG" id="sau:SA0813"/>
<dbReference type="HOGENOM" id="CLU_007100_2_1_9"/>
<dbReference type="GO" id="GO:0005886">
    <property type="term" value="C:plasma membrane"/>
    <property type="evidence" value="ECO:0007669"/>
    <property type="project" value="UniProtKB-SubCell"/>
</dbReference>
<dbReference type="GO" id="GO:0015297">
    <property type="term" value="F:antiporter activity"/>
    <property type="evidence" value="ECO:0007669"/>
    <property type="project" value="UniProtKB-KW"/>
</dbReference>
<dbReference type="GO" id="GO:1902600">
    <property type="term" value="P:proton transmembrane transport"/>
    <property type="evidence" value="ECO:0007669"/>
    <property type="project" value="UniProtKB-KW"/>
</dbReference>
<dbReference type="GO" id="GO:0006814">
    <property type="term" value="P:sodium ion transport"/>
    <property type="evidence" value="ECO:0007669"/>
    <property type="project" value="UniProtKB-KW"/>
</dbReference>
<dbReference type="InterPro" id="IPR050616">
    <property type="entry name" value="CPA3_Na-H_Antiporter_A"/>
</dbReference>
<dbReference type="InterPro" id="IPR005663">
    <property type="entry name" value="MrpA/MnhA1/PhaAB"/>
</dbReference>
<dbReference type="InterPro" id="IPR025383">
    <property type="entry name" value="MrpA_C/MbhD"/>
</dbReference>
<dbReference type="InterPro" id="IPR046806">
    <property type="entry name" value="MrpA_C/MbhE"/>
</dbReference>
<dbReference type="InterPro" id="IPR001750">
    <property type="entry name" value="ND/Mrp_TM"/>
</dbReference>
<dbReference type="InterPro" id="IPR001516">
    <property type="entry name" value="Proton_antipo_N"/>
</dbReference>
<dbReference type="NCBIfam" id="TIGR00940">
    <property type="entry name" value="2a6301s01"/>
    <property type="match status" value="1"/>
</dbReference>
<dbReference type="NCBIfam" id="NF009285">
    <property type="entry name" value="PRK12645.1"/>
    <property type="match status" value="1"/>
</dbReference>
<dbReference type="PANTHER" id="PTHR43373">
    <property type="entry name" value="NA(+)/H(+) ANTIPORTER SUBUNIT"/>
    <property type="match status" value="1"/>
</dbReference>
<dbReference type="PANTHER" id="PTHR43373:SF1">
    <property type="entry name" value="NA(+)_H(+) ANTIPORTER SUBUNIT A"/>
    <property type="match status" value="1"/>
</dbReference>
<dbReference type="Pfam" id="PF13244">
    <property type="entry name" value="MbhD"/>
    <property type="match status" value="1"/>
</dbReference>
<dbReference type="Pfam" id="PF20501">
    <property type="entry name" value="MbhE"/>
    <property type="match status" value="1"/>
</dbReference>
<dbReference type="Pfam" id="PF00361">
    <property type="entry name" value="Proton_antipo_M"/>
    <property type="match status" value="1"/>
</dbReference>
<dbReference type="Pfam" id="PF00662">
    <property type="entry name" value="Proton_antipo_N"/>
    <property type="match status" value="1"/>
</dbReference>
<dbReference type="PRINTS" id="PR01434">
    <property type="entry name" value="NADHDHGNASE5"/>
</dbReference>
<dbReference type="PRINTS" id="PR01435">
    <property type="entry name" value="NPOXDRDTASE5"/>
</dbReference>
<feature type="chain" id="PRO_0000217068" description="Na(+)/H(+) antiporter subunit A1">
    <location>
        <begin position="1"/>
        <end position="801"/>
    </location>
</feature>
<feature type="transmembrane region" description="Helical" evidence="2">
    <location>
        <begin position="4"/>
        <end position="25"/>
    </location>
</feature>
<feature type="transmembrane region" description="Helical" evidence="2">
    <location>
        <begin position="30"/>
        <end position="49"/>
    </location>
</feature>
<feature type="transmembrane region" description="Helical" evidence="2">
    <location>
        <begin position="79"/>
        <end position="101"/>
    </location>
</feature>
<feature type="transmembrane region" description="Helical" evidence="2">
    <location>
        <begin position="108"/>
        <end position="127"/>
    </location>
</feature>
<feature type="transmembrane region" description="Helical" evidence="2">
    <location>
        <begin position="131"/>
        <end position="153"/>
    </location>
</feature>
<feature type="transmembrane region" description="Helical" evidence="2">
    <location>
        <begin position="166"/>
        <end position="188"/>
    </location>
</feature>
<feature type="transmembrane region" description="Helical" evidence="2">
    <location>
        <begin position="208"/>
        <end position="230"/>
    </location>
</feature>
<feature type="transmembrane region" description="Helical" evidence="2">
    <location>
        <begin position="243"/>
        <end position="265"/>
    </location>
</feature>
<feature type="transmembrane region" description="Helical" evidence="2">
    <location>
        <begin position="270"/>
        <end position="289"/>
    </location>
</feature>
<feature type="transmembrane region" description="Helical" evidence="2">
    <location>
        <begin position="302"/>
        <end position="324"/>
    </location>
</feature>
<feature type="transmembrane region" description="Helical" evidence="2">
    <location>
        <begin position="339"/>
        <end position="361"/>
    </location>
</feature>
<feature type="transmembrane region" description="Helical" evidence="2">
    <location>
        <begin position="373"/>
        <end position="395"/>
    </location>
</feature>
<feature type="transmembrane region" description="Helical" evidence="2">
    <location>
        <begin position="429"/>
        <end position="451"/>
    </location>
</feature>
<feature type="transmembrane region" description="Helical" evidence="2">
    <location>
        <begin position="472"/>
        <end position="494"/>
    </location>
</feature>
<feature type="transmembrane region" description="Helical" evidence="2">
    <location>
        <begin position="526"/>
        <end position="548"/>
    </location>
</feature>
<feature type="transmembrane region" description="Helical" evidence="2">
    <location>
        <begin position="589"/>
        <end position="611"/>
    </location>
</feature>
<feature type="transmembrane region" description="Helical" evidence="2">
    <location>
        <begin position="621"/>
        <end position="641"/>
    </location>
</feature>
<feature type="transmembrane region" description="Helical" evidence="2">
    <location>
        <begin position="646"/>
        <end position="668"/>
    </location>
</feature>
<feature type="transmembrane region" description="Helical" evidence="2">
    <location>
        <begin position="672"/>
        <end position="694"/>
    </location>
</feature>
<feature type="transmembrane region" description="Helical" evidence="2">
    <location>
        <begin position="707"/>
        <end position="729"/>
    </location>
</feature>
<feature type="transmembrane region" description="Helical" evidence="2">
    <location>
        <begin position="767"/>
        <end position="784"/>
    </location>
</feature>
<protein>
    <recommendedName>
        <fullName>Na(+)/H(+) antiporter subunit A1</fullName>
    </recommendedName>
    <alternativeName>
        <fullName>Mnh complex subunit A1</fullName>
    </alternativeName>
</protein>
<keyword id="KW-0050">Antiport</keyword>
<keyword id="KW-1003">Cell membrane</keyword>
<keyword id="KW-0375">Hydrogen ion transport</keyword>
<keyword id="KW-0406">Ion transport</keyword>
<keyword id="KW-0472">Membrane</keyword>
<keyword id="KW-0915">Sodium</keyword>
<keyword id="KW-0739">Sodium transport</keyword>
<keyword id="KW-0812">Transmembrane</keyword>
<keyword id="KW-1133">Transmembrane helix</keyword>
<keyword id="KW-0813">Transport</keyword>
<accession>P60675</accession>
<accession>Q99VD5</accession>
<reference key="1">
    <citation type="journal article" date="2001" name="Lancet">
        <title>Whole genome sequencing of meticillin-resistant Staphylococcus aureus.</title>
        <authorList>
            <person name="Kuroda M."/>
            <person name="Ohta T."/>
            <person name="Uchiyama I."/>
            <person name="Baba T."/>
            <person name="Yuzawa H."/>
            <person name="Kobayashi I."/>
            <person name="Cui L."/>
            <person name="Oguchi A."/>
            <person name="Aoki K."/>
            <person name="Nagai Y."/>
            <person name="Lian J.-Q."/>
            <person name="Ito T."/>
            <person name="Kanamori M."/>
            <person name="Matsumaru H."/>
            <person name="Maruyama A."/>
            <person name="Murakami H."/>
            <person name="Hosoyama A."/>
            <person name="Mizutani-Ui Y."/>
            <person name="Takahashi N.K."/>
            <person name="Sawano T."/>
            <person name="Inoue R."/>
            <person name="Kaito C."/>
            <person name="Sekimizu K."/>
            <person name="Hirakawa H."/>
            <person name="Kuhara S."/>
            <person name="Goto S."/>
            <person name="Yabuzaki J."/>
            <person name="Kanehisa M."/>
            <person name="Yamashita A."/>
            <person name="Oshima K."/>
            <person name="Furuya K."/>
            <person name="Yoshino C."/>
            <person name="Shiba T."/>
            <person name="Hattori M."/>
            <person name="Ogasawara N."/>
            <person name="Hayashi H."/>
            <person name="Hiramatsu K."/>
        </authorList>
    </citation>
    <scope>NUCLEOTIDE SEQUENCE [LARGE SCALE GENOMIC DNA]</scope>
    <source>
        <strain>N315</strain>
    </source>
</reference>
<reference key="2">
    <citation type="submission" date="2007-10" db="UniProtKB">
        <title>Shotgun proteomic analysis of total and membrane protein extracts of S. aureus strain N315.</title>
        <authorList>
            <person name="Vaezzadeh A.R."/>
            <person name="Deshusses J."/>
            <person name="Lescuyer P."/>
            <person name="Hochstrasser D.F."/>
        </authorList>
    </citation>
    <scope>IDENTIFICATION BY MASS SPECTROMETRY [LARGE SCALE ANALYSIS]</scope>
    <source>
        <strain>N315</strain>
    </source>
</reference>
<proteinExistence type="evidence at protein level"/>
<evidence type="ECO:0000250" key="1"/>
<evidence type="ECO:0000255" key="2"/>
<evidence type="ECO:0000305" key="3"/>